<feature type="chain" id="PRO_0000458564" description="Small ribosomal subunit protein mS37">
    <location>
        <begin position="1"/>
        <end position="90"/>
    </location>
</feature>
<feature type="disulfide bond" evidence="5 6">
    <location>
        <begin position="27"/>
        <end position="58"/>
    </location>
</feature>
<gene>
    <name type="primary">mrp10</name>
    <name type="ORF">NCU06066</name>
</gene>
<protein>
    <recommendedName>
        <fullName evidence="2">Small ribosomal subunit protein mS37</fullName>
    </recommendedName>
</protein>
<proteinExistence type="evidence at protein level"/>
<accession>Q7S4Y4</accession>
<evidence type="ECO:0000269" key="1">
    <source>
    </source>
</evidence>
<evidence type="ECO:0000303" key="2">
    <source>
    </source>
</evidence>
<evidence type="ECO:0000305" key="3"/>
<evidence type="ECO:0000305" key="4">
    <source>
    </source>
</evidence>
<evidence type="ECO:0007744" key="5">
    <source>
        <dbReference type="PDB" id="6YW5"/>
    </source>
</evidence>
<evidence type="ECO:0007744" key="6">
    <source>
        <dbReference type="PDB" id="6YWX"/>
    </source>
</evidence>
<dbReference type="EMBL" id="CM002242">
    <property type="protein sequence ID" value="EAA30593.1"/>
    <property type="molecule type" value="Genomic_DNA"/>
</dbReference>
<dbReference type="RefSeq" id="XP_959829.1">
    <property type="nucleotide sequence ID" value="XM_954736.3"/>
</dbReference>
<dbReference type="PDB" id="6YW5">
    <property type="method" value="EM"/>
    <property type="resolution" value="2.85 A"/>
    <property type="chains" value="11=1-90"/>
</dbReference>
<dbReference type="PDB" id="6YWX">
    <property type="method" value="EM"/>
    <property type="resolution" value="3.10 A"/>
    <property type="chains" value="11=1-90"/>
</dbReference>
<dbReference type="PDBsum" id="6YW5"/>
<dbReference type="PDBsum" id="6YWX"/>
<dbReference type="EMDB" id="EMD-10958"/>
<dbReference type="EMDB" id="EMD-10978"/>
<dbReference type="SMR" id="Q7S4Y4"/>
<dbReference type="FunCoup" id="Q7S4Y4">
    <property type="interactions" value="75"/>
</dbReference>
<dbReference type="STRING" id="367110.Q7S4Y4"/>
<dbReference type="PaxDb" id="5141-EFNCRP00000005475"/>
<dbReference type="EnsemblFungi" id="EAA30593">
    <property type="protein sequence ID" value="EAA30593"/>
    <property type="gene ID" value="NCU06066"/>
</dbReference>
<dbReference type="GeneID" id="3875976"/>
<dbReference type="KEGG" id="ncr:NCU06066"/>
<dbReference type="VEuPathDB" id="FungiDB:NCU06066"/>
<dbReference type="HOGENOM" id="CLU_162186_0_0_1"/>
<dbReference type="InParanoid" id="Q7S4Y4"/>
<dbReference type="OMA" id="AAMLGCW"/>
<dbReference type="OrthoDB" id="2210at2759"/>
<dbReference type="Proteomes" id="UP000001805">
    <property type="component" value="Chromosome 7, Linkage Group VII"/>
</dbReference>
<dbReference type="GO" id="GO:0005763">
    <property type="term" value="C:mitochondrial small ribosomal subunit"/>
    <property type="evidence" value="ECO:0000318"/>
    <property type="project" value="GO_Central"/>
</dbReference>
<dbReference type="GO" id="GO:0003735">
    <property type="term" value="F:structural constituent of ribosome"/>
    <property type="evidence" value="ECO:0000318"/>
    <property type="project" value="GO_Central"/>
</dbReference>
<dbReference type="GO" id="GO:0032543">
    <property type="term" value="P:mitochondrial translation"/>
    <property type="evidence" value="ECO:0000318"/>
    <property type="project" value="GO_Central"/>
</dbReference>
<dbReference type="InterPro" id="IPR017264">
    <property type="entry name" value="Ribosomal_mS37_fun"/>
</dbReference>
<dbReference type="PANTHER" id="PTHR28066">
    <property type="entry name" value="37S RIBOSOMAL PROTEIN MRP10, MITOCHONDRIAL"/>
    <property type="match status" value="1"/>
</dbReference>
<dbReference type="PANTHER" id="PTHR28066:SF1">
    <property type="entry name" value="SMALL RIBOSOMAL SUBUNIT PROTEIN MS37"/>
    <property type="match status" value="1"/>
</dbReference>
<dbReference type="PIRSF" id="PIRSF037706">
    <property type="entry name" value="MRP10"/>
    <property type="match status" value="1"/>
</dbReference>
<reference key="1">
    <citation type="journal article" date="2003" name="Nature">
        <title>The genome sequence of the filamentous fungus Neurospora crassa.</title>
        <authorList>
            <person name="Galagan J.E."/>
            <person name="Calvo S.E."/>
            <person name="Borkovich K.A."/>
            <person name="Selker E.U."/>
            <person name="Read N.D."/>
            <person name="Jaffe D.B."/>
            <person name="FitzHugh W."/>
            <person name="Ma L.-J."/>
            <person name="Smirnov S."/>
            <person name="Purcell S."/>
            <person name="Rehman B."/>
            <person name="Elkins T."/>
            <person name="Engels R."/>
            <person name="Wang S."/>
            <person name="Nielsen C.B."/>
            <person name="Butler J."/>
            <person name="Endrizzi M."/>
            <person name="Qui D."/>
            <person name="Ianakiev P."/>
            <person name="Bell-Pedersen D."/>
            <person name="Nelson M.A."/>
            <person name="Werner-Washburne M."/>
            <person name="Selitrennikoff C.P."/>
            <person name="Kinsey J.A."/>
            <person name="Braun E.L."/>
            <person name="Zelter A."/>
            <person name="Schulte U."/>
            <person name="Kothe G.O."/>
            <person name="Jedd G."/>
            <person name="Mewes H.-W."/>
            <person name="Staben C."/>
            <person name="Marcotte E."/>
            <person name="Greenberg D."/>
            <person name="Roy A."/>
            <person name="Foley K."/>
            <person name="Naylor J."/>
            <person name="Stange-Thomann N."/>
            <person name="Barrett R."/>
            <person name="Gnerre S."/>
            <person name="Kamal M."/>
            <person name="Kamvysselis M."/>
            <person name="Mauceli E.W."/>
            <person name="Bielke C."/>
            <person name="Rudd S."/>
            <person name="Frishman D."/>
            <person name="Krystofova S."/>
            <person name="Rasmussen C."/>
            <person name="Metzenberg R.L."/>
            <person name="Perkins D.D."/>
            <person name="Kroken S."/>
            <person name="Cogoni C."/>
            <person name="Macino G."/>
            <person name="Catcheside D.E.A."/>
            <person name="Li W."/>
            <person name="Pratt R.J."/>
            <person name="Osmani S.A."/>
            <person name="DeSouza C.P.C."/>
            <person name="Glass N.L."/>
            <person name="Orbach M.J."/>
            <person name="Berglund J.A."/>
            <person name="Voelker R."/>
            <person name="Yarden O."/>
            <person name="Plamann M."/>
            <person name="Seiler S."/>
            <person name="Dunlap J.C."/>
            <person name="Radford A."/>
            <person name="Aramayo R."/>
            <person name="Natvig D.O."/>
            <person name="Alex L.A."/>
            <person name="Mannhaupt G."/>
            <person name="Ebbole D.J."/>
            <person name="Freitag M."/>
            <person name="Paulsen I."/>
            <person name="Sachs M.S."/>
            <person name="Lander E.S."/>
            <person name="Nusbaum C."/>
            <person name="Birren B.W."/>
        </authorList>
    </citation>
    <scope>NUCLEOTIDE SEQUENCE [LARGE SCALE GENOMIC DNA]</scope>
    <source>
        <strain>ATCC 24698 / 74-OR23-1A / CBS 708.71 / DSM 1257 / FGSC 987</strain>
    </source>
</reference>
<reference evidence="5 6" key="2">
    <citation type="journal article" date="2020" name="Nat. Commun.">
        <title>Analysis of translating mitoribosome reveals functional characteristics of translation in mitochondria of fungi.</title>
        <authorList>
            <person name="Itoh Y."/>
            <person name="Naschberger A."/>
            <person name="Mortezaei N."/>
            <person name="Herrmann J.M."/>
            <person name="Amunts A."/>
        </authorList>
    </citation>
    <scope>STRUCTURE BY ELECTRON MICROSCOPY (2.85 ANGSTROMS)</scope>
    <scope>DISULFIDE BONDS</scope>
</reference>
<keyword id="KW-0002">3D-structure</keyword>
<keyword id="KW-1015">Disulfide bond</keyword>
<keyword id="KW-0496">Mitochondrion</keyword>
<keyword id="KW-1185">Reference proteome</keyword>
<keyword id="KW-0687">Ribonucleoprotein</keyword>
<keyword id="KW-0689">Ribosomal protein</keyword>
<comment type="function">
    <text evidence="4">Component of the mitochondrial ribosome (mitoribosome), a dedicated translation machinery responsible for the synthesis of mitochondrial genome-encoded proteins, including at least some of the essential transmembrane subunits of the mitochondrial respiratory chain. The mitoribosomes are attached to the mitochondrial inner membrane and translation products are cotranslationally integrated into the membrane.</text>
</comment>
<comment type="subunit">
    <text evidence="1">Component of the mitochondrial small ribosomal subunit (mt-SSU). Mature N.crassa 74S mitochondrial ribosomes consist of a small (37S) and a large (54S) subunit. The 37S small subunit contains a 16S ribosomal RNA (16S mt-rRNA) and 32 different proteins. The 54S large subunit contains a 23S rRNA (23S mt-rRNA) and 42 different proteins.</text>
</comment>
<comment type="subcellular location">
    <subcellularLocation>
        <location evidence="1">Mitochondrion</location>
    </subcellularLocation>
</comment>
<comment type="similarity">
    <text evidence="3">Belongs to the mitochondrion-specific ribosomal protein mS37 family.</text>
</comment>
<name>MRP10_NEUCR</name>
<sequence>MPNKPIRLPPLKQLRVRQANKAEENPCIAVMSSVLACWASAGYNSAGCATVENALRACMDAPKPAPKPNNTINYHLSRFQERLTQGKSKK</sequence>
<organism>
    <name type="scientific">Neurospora crassa (strain ATCC 24698 / 74-OR23-1A / CBS 708.71 / DSM 1257 / FGSC 987)</name>
    <dbReference type="NCBI Taxonomy" id="367110"/>
    <lineage>
        <taxon>Eukaryota</taxon>
        <taxon>Fungi</taxon>
        <taxon>Dikarya</taxon>
        <taxon>Ascomycota</taxon>
        <taxon>Pezizomycotina</taxon>
        <taxon>Sordariomycetes</taxon>
        <taxon>Sordariomycetidae</taxon>
        <taxon>Sordariales</taxon>
        <taxon>Sordariaceae</taxon>
        <taxon>Neurospora</taxon>
    </lineage>
</organism>